<comment type="function">
    <text evidence="6">Has bactericidal activity. Potent activity against S.typhimurium and S.entiriditis.</text>
</comment>
<comment type="subcellular location">
    <subcellularLocation>
        <location>Secreted</location>
    </subcellularLocation>
    <subcellularLocation>
        <location evidence="1">Cytoplasmic granule</location>
    </subcellularLocation>
</comment>
<comment type="tissue specificity">
    <text evidence="3 4 5 6">Expressed in bone marrow, testis, ovary, lung and trachea. Expressed in the ovarian stroma, but not in the ovarian follicles.</text>
</comment>
<comment type="similarity">
    <text evidence="7">Belongs to the beta-defensin family.</text>
</comment>
<gene>
    <name type="primary">GAL6</name>
</gene>
<organism>
    <name type="scientific">Gallus gallus</name>
    <name type="common">Chicken</name>
    <dbReference type="NCBI Taxonomy" id="9031"/>
    <lineage>
        <taxon>Eukaryota</taxon>
        <taxon>Metazoa</taxon>
        <taxon>Chordata</taxon>
        <taxon>Craniata</taxon>
        <taxon>Vertebrata</taxon>
        <taxon>Euteleostomi</taxon>
        <taxon>Archelosauria</taxon>
        <taxon>Archosauria</taxon>
        <taxon>Dinosauria</taxon>
        <taxon>Saurischia</taxon>
        <taxon>Theropoda</taxon>
        <taxon>Coelurosauria</taxon>
        <taxon>Aves</taxon>
        <taxon>Neognathae</taxon>
        <taxon>Galloanserae</taxon>
        <taxon>Galliformes</taxon>
        <taxon>Phasianidae</taxon>
        <taxon>Phasianinae</taxon>
        <taxon>Gallus</taxon>
    </lineage>
</organism>
<sequence>MRILYLLLSVLFVVLQGVAGQPYFSSPIHACRYQRGVCIPGPCRWPYYRVGSCGSGLKSCCVRNRWA</sequence>
<dbReference type="EMBL" id="AY534892">
    <property type="protein sequence ID" value="AAS99315.1"/>
    <property type="molecule type" value="mRNA"/>
</dbReference>
<dbReference type="EMBL" id="AY621308">
    <property type="protein sequence ID" value="AAT45546.1"/>
    <property type="molecule type" value="mRNA"/>
</dbReference>
<dbReference type="EMBL" id="AY621321">
    <property type="protein sequence ID" value="AAT48930.1"/>
    <property type="molecule type" value="Genomic_DNA"/>
</dbReference>
<dbReference type="EMBL" id="DQ677637">
    <property type="protein sequence ID" value="ABG73371.1"/>
    <property type="molecule type" value="mRNA"/>
</dbReference>
<dbReference type="EMBL" id="DQ858303">
    <property type="protein sequence ID" value="ABI48219.1"/>
    <property type="molecule type" value="mRNA"/>
</dbReference>
<dbReference type="EMBL" id="DQ858316">
    <property type="protein sequence ID" value="ABI48232.1"/>
    <property type="molecule type" value="mRNA"/>
</dbReference>
<dbReference type="EMBL" id="DQ858329">
    <property type="protein sequence ID" value="ABI48245.1"/>
    <property type="molecule type" value="mRNA"/>
</dbReference>
<dbReference type="EMBL" id="DQ858343">
    <property type="protein sequence ID" value="ABI48259.1"/>
    <property type="molecule type" value="mRNA"/>
</dbReference>
<dbReference type="RefSeq" id="NP_001001193.1">
    <property type="nucleotide sequence ID" value="NM_001001193.1"/>
</dbReference>
<dbReference type="SMR" id="Q6QLR3"/>
<dbReference type="FunCoup" id="Q6QLR3">
    <property type="interactions" value="15"/>
</dbReference>
<dbReference type="STRING" id="9031.ENSGALP00000026847"/>
<dbReference type="PaxDb" id="9031-ENSGALP00000026847"/>
<dbReference type="GeneID" id="407776"/>
<dbReference type="KEGG" id="gga:407776"/>
<dbReference type="CTD" id="407776"/>
<dbReference type="VEuPathDB" id="HostDB:geneid_407776"/>
<dbReference type="HOGENOM" id="CLU_189296_5_0_1"/>
<dbReference type="InParanoid" id="Q6QLR3"/>
<dbReference type="OMA" id="YYRVGSC"/>
<dbReference type="OrthoDB" id="9122444at2759"/>
<dbReference type="PhylomeDB" id="Q6QLR3"/>
<dbReference type="Reactome" id="R-GGA-1461957">
    <property type="pathway name" value="Beta defensins"/>
</dbReference>
<dbReference type="Reactome" id="R-GGA-1461973">
    <property type="pathway name" value="Defensins"/>
</dbReference>
<dbReference type="PRO" id="PR:Q6QLR3"/>
<dbReference type="Proteomes" id="UP000000539">
    <property type="component" value="Chromosome 3"/>
</dbReference>
<dbReference type="Bgee" id="ENSGALG00000016668">
    <property type="expression patterns" value="Expressed in granulocyte and 4 other cell types or tissues"/>
</dbReference>
<dbReference type="GO" id="GO:0005615">
    <property type="term" value="C:extracellular space"/>
    <property type="evidence" value="ECO:0000318"/>
    <property type="project" value="GO_Central"/>
</dbReference>
<dbReference type="GO" id="GO:0031731">
    <property type="term" value="F:CCR6 chemokine receptor binding"/>
    <property type="evidence" value="ECO:0000318"/>
    <property type="project" value="GO_Central"/>
</dbReference>
<dbReference type="GO" id="GO:0042056">
    <property type="term" value="F:chemoattractant activity"/>
    <property type="evidence" value="ECO:0000318"/>
    <property type="project" value="GO_Central"/>
</dbReference>
<dbReference type="GO" id="GO:0060326">
    <property type="term" value="P:cell chemotaxis"/>
    <property type="evidence" value="ECO:0000318"/>
    <property type="project" value="GO_Central"/>
</dbReference>
<dbReference type="GO" id="GO:0042742">
    <property type="term" value="P:defense response to bacterium"/>
    <property type="evidence" value="ECO:0000318"/>
    <property type="project" value="GO_Central"/>
</dbReference>
<dbReference type="InterPro" id="IPR001855">
    <property type="entry name" value="Defensin_beta-like"/>
</dbReference>
<dbReference type="PANTHER" id="PTHR20515">
    <property type="entry name" value="BETA-DEFENSIN"/>
    <property type="match status" value="1"/>
</dbReference>
<dbReference type="PANTHER" id="PTHR20515:SF20">
    <property type="entry name" value="GALLINACIN-1-RELATED"/>
    <property type="match status" value="1"/>
</dbReference>
<dbReference type="Pfam" id="PF00711">
    <property type="entry name" value="Defensin_beta"/>
    <property type="match status" value="1"/>
</dbReference>
<dbReference type="SUPFAM" id="SSF57392">
    <property type="entry name" value="Defensin-like"/>
    <property type="match status" value="1"/>
</dbReference>
<keyword id="KW-0044">Antibiotic</keyword>
<keyword id="KW-0929">Antimicrobial</keyword>
<keyword id="KW-0211">Defensin</keyword>
<keyword id="KW-1015">Disulfide bond</keyword>
<keyword id="KW-1185">Reference proteome</keyword>
<keyword id="KW-0964">Secreted</keyword>
<keyword id="KW-0732">Signal</keyword>
<evidence type="ECO:0000250" key="1"/>
<evidence type="ECO:0000255" key="2"/>
<evidence type="ECO:0000269" key="3">
    <source>
    </source>
</evidence>
<evidence type="ECO:0000269" key="4">
    <source>
    </source>
</evidence>
<evidence type="ECO:0000269" key="5">
    <source>
    </source>
</evidence>
<evidence type="ECO:0000269" key="6">
    <source>
    </source>
</evidence>
<evidence type="ECO:0000305" key="7"/>
<feature type="signal peptide" evidence="2">
    <location>
        <begin position="1"/>
        <end position="19"/>
    </location>
</feature>
<feature type="propeptide" id="PRO_0000288564" evidence="1">
    <location>
        <begin position="20"/>
        <end position="25"/>
    </location>
</feature>
<feature type="chain" id="PRO_0000288565" description="Gallinacin-6">
    <location>
        <begin position="26"/>
        <end position="67"/>
    </location>
</feature>
<feature type="disulfide bond" evidence="1">
    <location>
        <begin position="31"/>
        <end position="60"/>
    </location>
</feature>
<feature type="disulfide bond" evidence="1">
    <location>
        <begin position="38"/>
        <end position="53"/>
    </location>
</feature>
<feature type="disulfide bond" evidence="1">
    <location>
        <begin position="43"/>
        <end position="61"/>
    </location>
</feature>
<accession>Q6QLR3</accession>
<proteinExistence type="evidence at transcript level"/>
<name>GLL6_CHICK</name>
<reference key="1">
    <citation type="journal article" date="2004" name="Immunogenetics">
        <title>Bioinformatic discovery and initial characterisation of nine novel antimicrobial peptide genes in the chicken.</title>
        <authorList>
            <person name="Lynn D.J."/>
            <person name="Higgs R."/>
            <person name="Gaines S."/>
            <person name="Tierney J."/>
            <person name="James T."/>
            <person name="Lloyd A.T."/>
            <person name="Fares M.A."/>
            <person name="Mulcahy G."/>
            <person name="O'Farrelly C."/>
        </authorList>
    </citation>
    <scope>NUCLEOTIDE SEQUENCE [MRNA]</scope>
    <scope>TISSUE SPECIFICITY</scope>
    <source>
        <tissue>Bone marrow</tissue>
    </source>
</reference>
<reference key="2">
    <citation type="journal article" date="2004" name="BMC Genomics">
        <title>A genome-wide screen identifies a single beta-defensin gene cluster in the chicken: implications for the origin and evolution of mammalian defensins.</title>
        <authorList>
            <person name="Xiao Y."/>
            <person name="Hughes A.L."/>
            <person name="Ando J."/>
            <person name="Matsuda Y."/>
            <person name="Cheng J.-F."/>
            <person name="Skinner-Noble D."/>
            <person name="Zhang G."/>
        </authorList>
    </citation>
    <scope>NUCLEOTIDE SEQUENCE [GENOMIC DNA / MRNA]</scope>
    <scope>TISSUE SPECIFICITY</scope>
</reference>
<reference key="3">
    <citation type="submission" date="2006-07" db="EMBL/GenBank/DDBJ databases">
        <title>Chicken beta-defensin in China chicken breeds.</title>
        <authorList>
            <person name="Chen Y."/>
            <person name="Cao Y."/>
            <person name="Xie Q."/>
            <person name="Bi Y."/>
            <person name="Chen J."/>
        </authorList>
    </citation>
    <scope>NUCLEOTIDE SEQUENCE [MRNA]</scope>
    <source>
        <strain>Guangxi Huang</strain>
        <strain>Huiyang bearded</strain>
        <strain>Qingyuan Ma</strain>
        <strain>Taihe silkies</strain>
        <strain>Xinghua</strain>
    </source>
</reference>
<reference key="4">
    <citation type="journal article" date="2007" name="Biochem. Biophys. Res. Commun.">
        <title>The chicken host peptides, gallinacins 4, 7, and 9 have antimicrobial activity against Salmonella serovars.</title>
        <authorList>
            <person name="Milona P."/>
            <person name="Townes C.L."/>
            <person name="Bevan R.M."/>
            <person name="Hall J."/>
        </authorList>
    </citation>
    <scope>FUNCTION</scope>
    <scope>TISSUE SPECIFICITY</scope>
</reference>
<reference key="5">
    <citation type="journal article" date="2007" name="Reproduction">
        <title>Changes in the expression of gallinacins, antimicrobial peptides, in ovarian follicles during follicular growth and in response to lipopolysaccharide in laying hens (Gallus domesticus).</title>
        <authorList>
            <person name="Subedi K."/>
            <person name="Isobe N."/>
            <person name="Nishibori M."/>
            <person name="Yoshimura Y."/>
        </authorList>
    </citation>
    <scope>TISSUE SPECIFICITY</scope>
</reference>
<protein>
    <recommendedName>
        <fullName>Gallinacin-6</fullName>
        <shortName>Gal 6</shortName>
    </recommendedName>
    <alternativeName>
        <fullName>Beta-defensin 6</fullName>
    </alternativeName>
    <alternativeName>
        <fullName>Gallinacin-4</fullName>
        <shortName>Gal-4</shortName>
    </alternativeName>
</protein>